<feature type="chain" id="PRO_0000099842" description="Light-harvesting protein B-800/850 gamma chain">
    <location>
        <begin position="1"/>
        <end position="118"/>
    </location>
</feature>
<protein>
    <recommendedName>
        <fullName>Light-harvesting protein B-800/850 gamma chain</fullName>
    </recommendedName>
</protein>
<reference key="1">
    <citation type="journal article" date="1989" name="J. Bacteriol.">
        <title>Genes downstream from pucB and pucA are essential for formation of the B800-850 complex of Rhodobacter capsulatus.</title>
        <authorList>
            <person name="Tichy H.V."/>
            <person name="Oberle B."/>
            <person name="Stiehle H."/>
            <person name="Schiltz E."/>
            <person name="Drews G."/>
        </authorList>
    </citation>
    <scope>NUCLEOTIDE SEQUENCE [GENOMIC DNA]</scope>
</reference>
<dbReference type="EMBL" id="M28510">
    <property type="protein sequence ID" value="AAA26165.1"/>
    <property type="molecule type" value="Genomic_DNA"/>
</dbReference>
<dbReference type="PIR" id="E33958">
    <property type="entry name" value="E33958"/>
</dbReference>
<dbReference type="GO" id="GO:0030076">
    <property type="term" value="C:light-harvesting complex"/>
    <property type="evidence" value="ECO:0007669"/>
    <property type="project" value="UniProtKB-KW"/>
</dbReference>
<name>LHG2_RHOCA</name>
<keyword id="KW-0042">Antenna complex</keyword>
<keyword id="KW-0437">Light-harvesting polypeptide</keyword>
<sequence>MTDNIMKDHRHIFLPQPVKADEKPGAFSERFGWKLLLDTPRKKNVYEGTKFMSQDFWPTPLVKTTAPKVKLIPADAPPQSAKFWKAPLLKDTPRQSNVIPGDFLPFSNTFGLATIQRR</sequence>
<proteinExistence type="predicted"/>
<comment type="function">
    <text>Seems to be required for the LH-II stabilization.</text>
</comment>
<organism>
    <name type="scientific">Rhodobacter capsulatus</name>
    <name type="common">Rhodopseudomonas capsulata</name>
    <dbReference type="NCBI Taxonomy" id="1061"/>
    <lineage>
        <taxon>Bacteria</taxon>
        <taxon>Pseudomonadati</taxon>
        <taxon>Pseudomonadota</taxon>
        <taxon>Alphaproteobacteria</taxon>
        <taxon>Rhodobacterales</taxon>
        <taxon>Rhodobacter group</taxon>
        <taxon>Rhodobacter</taxon>
    </lineage>
</organism>
<accession>P23460</accession>
<gene>
    <name type="primary">pucE</name>
</gene>